<feature type="chain" id="PRO_0000053767" description="Nuclear hormone receptor family member nhr-14">
    <location>
        <begin position="1"/>
        <end position="435"/>
    </location>
</feature>
<feature type="domain" description="NR LBD" evidence="2">
    <location>
        <begin position="131"/>
        <end position="355"/>
    </location>
</feature>
<feature type="DNA-binding region" description="Nuclear receptor" evidence="1">
    <location>
        <begin position="17"/>
        <end position="92"/>
    </location>
</feature>
<feature type="zinc finger region" description="NR C4-type" evidence="1">
    <location>
        <begin position="20"/>
        <end position="40"/>
    </location>
</feature>
<feature type="zinc finger region" description="NR C4-type" evidence="1">
    <location>
        <begin position="56"/>
        <end position="80"/>
    </location>
</feature>
<feature type="region of interest" description="Disordered" evidence="3">
    <location>
        <begin position="91"/>
        <end position="126"/>
    </location>
</feature>
<feature type="compositionally biased region" description="Polar residues" evidence="3">
    <location>
        <begin position="107"/>
        <end position="119"/>
    </location>
</feature>
<feature type="splice variant" id="VSP_007344" description="In isoform b." evidence="6">
    <original>EFGCHLQSMPVKVILS</original>
    <variation>YNRNSDVIFSQCPSK</variation>
    <location>
        <begin position="420"/>
        <end position="435"/>
    </location>
</feature>
<feature type="mutagenesis site" description="In qa6910; strong suppressor of the developmental delay phenotype of hif-1 mutants when grown under iron limiting conditions." evidence="5">
    <original>G</original>
    <variation>R</variation>
    <location>
        <position position="33"/>
    </location>
</feature>
<feature type="mutagenesis site" description="In qa6909; strong suppressor of the developmental delay phenotype of hif-1 mutants when grown under iron limiting conditions." evidence="5">
    <location>
        <begin position="49"/>
        <end position="435"/>
    </location>
</feature>
<keyword id="KW-0025">Alternative splicing</keyword>
<keyword id="KW-0238">DNA-binding</keyword>
<keyword id="KW-0479">Metal-binding</keyword>
<keyword id="KW-0539">Nucleus</keyword>
<keyword id="KW-0675">Receptor</keyword>
<keyword id="KW-1185">Reference proteome</keyword>
<keyword id="KW-0804">Transcription</keyword>
<keyword id="KW-0805">Transcription regulation</keyword>
<keyword id="KW-0862">Zinc</keyword>
<keyword id="KW-0863">Zinc-finger</keyword>
<organism>
    <name type="scientific">Caenorhabditis elegans</name>
    <dbReference type="NCBI Taxonomy" id="6239"/>
    <lineage>
        <taxon>Eukaryota</taxon>
        <taxon>Metazoa</taxon>
        <taxon>Ecdysozoa</taxon>
        <taxon>Nematoda</taxon>
        <taxon>Chromadorea</taxon>
        <taxon>Rhabditida</taxon>
        <taxon>Rhabditina</taxon>
        <taxon>Rhabditomorpha</taxon>
        <taxon>Rhabditoidea</taxon>
        <taxon>Rhabditidae</taxon>
        <taxon>Peloderinae</taxon>
        <taxon>Caenorhabditis</taxon>
    </lineage>
</organism>
<name>NHR14_CAEEL</name>
<dbReference type="EMBL" id="FO081164">
    <property type="protein sequence ID" value="CCD69597.1"/>
    <property type="molecule type" value="Genomic_DNA"/>
</dbReference>
<dbReference type="EMBL" id="FO081164">
    <property type="protein sequence ID" value="CCD69598.1"/>
    <property type="molecule type" value="Genomic_DNA"/>
</dbReference>
<dbReference type="EMBL" id="AF083229">
    <property type="protein sequence ID" value="AAD03687.1"/>
    <property type="molecule type" value="mRNA"/>
</dbReference>
<dbReference type="PIR" id="T43353">
    <property type="entry name" value="T43353"/>
</dbReference>
<dbReference type="RefSeq" id="NP_741860.2">
    <molecule id="O02151-1"/>
    <property type="nucleotide sequence ID" value="NM_171742.6"/>
</dbReference>
<dbReference type="RefSeq" id="NP_741861.2">
    <molecule id="O02151-2"/>
    <property type="nucleotide sequence ID" value="NM_171743.6"/>
</dbReference>
<dbReference type="SMR" id="O02151"/>
<dbReference type="BioGRID" id="46023">
    <property type="interactions" value="2"/>
</dbReference>
<dbReference type="FunCoup" id="O02151">
    <property type="interactions" value="151"/>
</dbReference>
<dbReference type="STRING" id="6239.T01B10.4a.2"/>
<dbReference type="PaxDb" id="6239-T01B10.4a.2"/>
<dbReference type="EnsemblMetazoa" id="T01B10.4a.1">
    <molecule id="O02151-1"/>
    <property type="protein sequence ID" value="T01B10.4a.1"/>
    <property type="gene ID" value="WBGene00003613"/>
</dbReference>
<dbReference type="EnsemblMetazoa" id="T01B10.4b.1">
    <molecule id="O02151-2"/>
    <property type="protein sequence ID" value="T01B10.4b.1"/>
    <property type="gene ID" value="WBGene00003613"/>
</dbReference>
<dbReference type="GeneID" id="181102"/>
<dbReference type="KEGG" id="cel:CELE_T01B10.4"/>
<dbReference type="UCSC" id="T01B10.4b">
    <molecule id="O02151-1"/>
    <property type="organism name" value="c. elegans"/>
</dbReference>
<dbReference type="AGR" id="WB:WBGene00003613"/>
<dbReference type="CTD" id="181102"/>
<dbReference type="WormBase" id="T01B10.4a">
    <molecule id="O02151-1"/>
    <property type="protein sequence ID" value="CE33818"/>
    <property type="gene ID" value="WBGene00003613"/>
    <property type="gene designation" value="nhr-14"/>
</dbReference>
<dbReference type="WormBase" id="T01B10.4b">
    <molecule id="O02151-2"/>
    <property type="protein sequence ID" value="CE33819"/>
    <property type="gene ID" value="WBGene00003613"/>
    <property type="gene designation" value="nhr-14"/>
</dbReference>
<dbReference type="eggNOG" id="KOG4215">
    <property type="taxonomic scope" value="Eukaryota"/>
</dbReference>
<dbReference type="InParanoid" id="O02151"/>
<dbReference type="OMA" id="FAYMSNT"/>
<dbReference type="OrthoDB" id="5771769at2759"/>
<dbReference type="PhylomeDB" id="O02151"/>
<dbReference type="Reactome" id="R-CEL-383280">
    <property type="pathway name" value="Nuclear Receptor transcription pathway"/>
</dbReference>
<dbReference type="PRO" id="PR:O02151"/>
<dbReference type="Proteomes" id="UP000001940">
    <property type="component" value="Chromosome X"/>
</dbReference>
<dbReference type="Bgee" id="WBGene00003613">
    <property type="expression patterns" value="Expressed in larva and 3 other cell types or tissues"/>
</dbReference>
<dbReference type="GO" id="GO:0005634">
    <property type="term" value="C:nucleus"/>
    <property type="evidence" value="ECO:0000314"/>
    <property type="project" value="UniProtKB"/>
</dbReference>
<dbReference type="GO" id="GO:0004879">
    <property type="term" value="F:nuclear receptor activity"/>
    <property type="evidence" value="ECO:0000318"/>
    <property type="project" value="GO_Central"/>
</dbReference>
<dbReference type="GO" id="GO:0000978">
    <property type="term" value="F:RNA polymerase II cis-regulatory region sequence-specific DNA binding"/>
    <property type="evidence" value="ECO:0000318"/>
    <property type="project" value="GO_Central"/>
</dbReference>
<dbReference type="GO" id="GO:1990239">
    <property type="term" value="F:steroid hormone binding"/>
    <property type="evidence" value="ECO:0000314"/>
    <property type="project" value="WormBase"/>
</dbReference>
<dbReference type="GO" id="GO:0008270">
    <property type="term" value="F:zinc ion binding"/>
    <property type="evidence" value="ECO:0007669"/>
    <property type="project" value="UniProtKB-KW"/>
</dbReference>
<dbReference type="GO" id="GO:0030154">
    <property type="term" value="P:cell differentiation"/>
    <property type="evidence" value="ECO:0000318"/>
    <property type="project" value="GO_Central"/>
</dbReference>
<dbReference type="GO" id="GO:0050829">
    <property type="term" value="P:defense response to Gram-negative bacterium"/>
    <property type="evidence" value="ECO:0000315"/>
    <property type="project" value="UniProtKB"/>
</dbReference>
<dbReference type="GO" id="GO:1900181">
    <property type="term" value="P:negative regulation of protein localization to nucleus"/>
    <property type="evidence" value="ECO:0000315"/>
    <property type="project" value="UniProtKB"/>
</dbReference>
<dbReference type="GO" id="GO:0045088">
    <property type="term" value="P:regulation of innate immune response"/>
    <property type="evidence" value="ECO:0000315"/>
    <property type="project" value="UniProtKB"/>
</dbReference>
<dbReference type="GO" id="GO:0006357">
    <property type="term" value="P:regulation of transcription by RNA polymerase II"/>
    <property type="evidence" value="ECO:0000318"/>
    <property type="project" value="GO_Central"/>
</dbReference>
<dbReference type="CDD" id="cd06960">
    <property type="entry name" value="NR_DBD_HNF4A"/>
    <property type="match status" value="1"/>
</dbReference>
<dbReference type="CDD" id="cd06157">
    <property type="entry name" value="NR_LBD"/>
    <property type="match status" value="1"/>
</dbReference>
<dbReference type="FunFam" id="3.30.50.10:FF:000030">
    <property type="entry name" value="Nuclear Hormone Receptor family"/>
    <property type="match status" value="1"/>
</dbReference>
<dbReference type="FunFam" id="1.10.565.10:FF:000061">
    <property type="entry name" value="Protein CBR-NHR-14"/>
    <property type="match status" value="1"/>
</dbReference>
<dbReference type="Gene3D" id="3.30.50.10">
    <property type="entry name" value="Erythroid Transcription Factor GATA-1, subunit A"/>
    <property type="match status" value="1"/>
</dbReference>
<dbReference type="Gene3D" id="1.10.565.10">
    <property type="entry name" value="Retinoid X Receptor"/>
    <property type="match status" value="1"/>
</dbReference>
<dbReference type="InterPro" id="IPR049636">
    <property type="entry name" value="HNF4-like_DBD"/>
</dbReference>
<dbReference type="InterPro" id="IPR035500">
    <property type="entry name" value="NHR-like_dom_sf"/>
</dbReference>
<dbReference type="InterPro" id="IPR000536">
    <property type="entry name" value="Nucl_hrmn_rcpt_lig-bd"/>
</dbReference>
<dbReference type="InterPro" id="IPR050274">
    <property type="entry name" value="Nuclear_hormone_rcpt_NR2"/>
</dbReference>
<dbReference type="InterPro" id="IPR001723">
    <property type="entry name" value="Nuclear_hrmn_rcpt"/>
</dbReference>
<dbReference type="InterPro" id="IPR001628">
    <property type="entry name" value="Znf_hrmn_rcpt"/>
</dbReference>
<dbReference type="InterPro" id="IPR013088">
    <property type="entry name" value="Znf_NHR/GATA"/>
</dbReference>
<dbReference type="PANTHER" id="PTHR24083">
    <property type="entry name" value="NUCLEAR HORMONE RECEPTOR"/>
    <property type="match status" value="1"/>
</dbReference>
<dbReference type="Pfam" id="PF00104">
    <property type="entry name" value="Hormone_recep"/>
    <property type="match status" value="1"/>
</dbReference>
<dbReference type="Pfam" id="PF00105">
    <property type="entry name" value="zf-C4"/>
    <property type="match status" value="1"/>
</dbReference>
<dbReference type="PRINTS" id="PR00398">
    <property type="entry name" value="STRDHORMONER"/>
</dbReference>
<dbReference type="PRINTS" id="PR00047">
    <property type="entry name" value="STROIDFINGER"/>
</dbReference>
<dbReference type="SMART" id="SM00430">
    <property type="entry name" value="HOLI"/>
    <property type="match status" value="1"/>
</dbReference>
<dbReference type="SMART" id="SM00399">
    <property type="entry name" value="ZnF_C4"/>
    <property type="match status" value="1"/>
</dbReference>
<dbReference type="SUPFAM" id="SSF57716">
    <property type="entry name" value="Glucocorticoid receptor-like (DNA-binding domain)"/>
    <property type="match status" value="1"/>
</dbReference>
<dbReference type="SUPFAM" id="SSF48508">
    <property type="entry name" value="Nuclear receptor ligand-binding domain"/>
    <property type="match status" value="1"/>
</dbReference>
<dbReference type="PROSITE" id="PS51843">
    <property type="entry name" value="NR_LBD"/>
    <property type="match status" value="1"/>
</dbReference>
<dbReference type="PROSITE" id="PS00031">
    <property type="entry name" value="NUCLEAR_REC_DBD_1"/>
    <property type="match status" value="1"/>
</dbReference>
<dbReference type="PROSITE" id="PS51030">
    <property type="entry name" value="NUCLEAR_REC_DBD_2"/>
    <property type="match status" value="1"/>
</dbReference>
<sequence length="435" mass="48560">MDFLISTSLSESTSTSADFCVVCGDKAIGKHYGAVACNGCKGFFRRSVWQNLQYTCRFNKQCNIDKDHRNACRYCRFQKCLADGMKPEAIQNERDRIGSTKRRKRSGANSENNSDSEGTPSPKIEVMGNSVSRKLIEMLLDIEHRLASNQSMNALLRDESEMKNSRQRAVNYLIGWTNMLHPLPEVPLADKVLLLKKFSSAFTLLGTLQRSMALPHFVLPNDQVLSISASHPPELFEALTRIIDELLTPLRRLRTDHAEFSCLKALLLLNPDVVGISNNTRERIREARDALLKTLFAYMSNTQNSIDASLRVSSLLMIIPSLISVSSSIMEFPALSDLFGLGDVIKRDTISPKIETPPLEMKPMMPKIAQPPVTSAPTVPTNIMMNKDLISQIMNNPQLFPLLPMPQTASPPMSFMGQSEFGCHLQSMPVKVILS</sequence>
<protein>
    <recommendedName>
        <fullName>Nuclear hormone receptor family member nhr-14</fullName>
    </recommendedName>
</protein>
<reference key="1">
    <citation type="journal article" date="1998" name="Science">
        <title>Genome sequence of the nematode C. elegans: a platform for investigating biology.</title>
        <authorList>
            <consortium name="The C. elegans sequencing consortium"/>
        </authorList>
    </citation>
    <scope>NUCLEOTIDE SEQUENCE [LARGE SCALE GENOMIC DNA]</scope>
    <scope>ALTERNATIVE SPLICING</scope>
    <source>
        <strain>Bristol N2</strain>
    </source>
</reference>
<reference key="2">
    <citation type="journal article" date="1999" name="Genome Res.">
        <title>The nuclear receptor superfamily has undergone extensive proliferation and diversification in nematodes.</title>
        <authorList>
            <person name="Sluder A.E."/>
            <person name="Mathews S.W."/>
            <person name="Hough D."/>
            <person name="Yin V.P."/>
            <person name="Maina C.V."/>
        </authorList>
    </citation>
    <scope>NUCLEOTIDE SEQUENCE [MRNA] OF 148-435 (ISOFORM A)</scope>
    <scope>FUNCTION</scope>
    <source>
        <strain>Bristol N2</strain>
    </source>
</reference>
<reference key="3">
    <citation type="journal article" date="2019" name="Elife">
        <title>NHR-14 loss of function couples intestinal iron uptake with innate immunity in C. elegans through PQM-1 signaling.</title>
        <authorList>
            <person name="Rajan M."/>
            <person name="Anderson C.P."/>
            <person name="Rindler P.M."/>
            <person name="Romney S.J."/>
            <person name="Ferreira Dos Santos M.C."/>
            <person name="Gertz J."/>
            <person name="Leibold E.A."/>
        </authorList>
    </citation>
    <scope>FUNCTION</scope>
    <scope>TISSUE SPECIFICITY</scope>
    <scope>DISRUPTION PHENOTYPE</scope>
    <scope>MUTAGENESIS OF GLY-33 AND 49-TRP--SER-435</scope>
</reference>
<proteinExistence type="evidence at protein level"/>
<gene>
    <name type="primary">nhr-14</name>
    <name type="ORF">T01B10.4</name>
</gene>
<comment type="function">
    <text evidence="4 5">Orphan nuclear receptor (PubMed:10022975). Transcriptional repressor of intestinal metal transporter smf-3 and genes of the innate immune response (PubMed:31532389). Inhibits nuclear localization of transcription factor pqm-1; in response to pathogen stress, may facilitate translocation of pqm-1, leading to transcriptional activation of genes involved in innate immunity and iron uptake (PubMed:31532389).</text>
</comment>
<comment type="subcellular location">
    <subcellularLocation>
        <location evidence="1">Nucleus</location>
    </subcellularLocation>
</comment>
<comment type="alternative products">
    <event type="alternative splicing"/>
    <isoform>
        <id>O02151-1</id>
        <name>a</name>
        <sequence type="displayed"/>
    </isoform>
    <isoform>
        <id>O02151-2</id>
        <name>b</name>
        <sequence type="described" ref="VSP_007344"/>
    </isoform>
</comment>
<comment type="tissue specificity">
    <text evidence="5">Expressed in intestine and head neurons in young adults.</text>
</comment>
<comment type="disruption phenotype">
    <text evidence="5">RNAi-mediated knockdown causes enhanced resistance to infection with the Gram-negative bacterium P.aeruginosa (PubMed:31532389). Knockdown suppresses the developmental delay phenotype of hif-1 mutants when grown under iron limiting conditions (PubMed:31532389).</text>
</comment>
<comment type="similarity">
    <text evidence="6">Belongs to the nuclear hormone receptor family.</text>
</comment>
<accession>O02151</accession>
<accession>Q8MPT6</accession>
<accession>Q9UAN4</accession>
<evidence type="ECO:0000255" key="1">
    <source>
        <dbReference type="PROSITE-ProRule" id="PRU00407"/>
    </source>
</evidence>
<evidence type="ECO:0000255" key="2">
    <source>
        <dbReference type="PROSITE-ProRule" id="PRU01189"/>
    </source>
</evidence>
<evidence type="ECO:0000256" key="3">
    <source>
        <dbReference type="SAM" id="MobiDB-lite"/>
    </source>
</evidence>
<evidence type="ECO:0000269" key="4">
    <source>
    </source>
</evidence>
<evidence type="ECO:0000269" key="5">
    <source>
    </source>
</evidence>
<evidence type="ECO:0000305" key="6"/>